<keyword id="KW-0975">Bacterial flagellum</keyword>
<keyword id="KW-0998">Cell outer membrane</keyword>
<keyword id="KW-0449">Lipoprotein</keyword>
<keyword id="KW-0472">Membrane</keyword>
<keyword id="KW-0564">Palmitate</keyword>
<keyword id="KW-0732">Signal</keyword>
<protein>
    <recommendedName>
        <fullName>Flagellar L-ring protein</fullName>
    </recommendedName>
    <alternativeName>
        <fullName>Basal body L-ring protein</fullName>
    </alternativeName>
</protein>
<accession>P58205</accession>
<evidence type="ECO:0000250" key="1"/>
<evidence type="ECO:0000255" key="2"/>
<evidence type="ECO:0000305" key="3"/>
<dbReference type="EMBL" id="AF205139">
    <property type="protein sequence ID" value="AAG29750.1"/>
    <property type="molecule type" value="Genomic_DNA"/>
</dbReference>
<dbReference type="SMR" id="P58205"/>
<dbReference type="GO" id="GO:0009427">
    <property type="term" value="C:bacterial-type flagellum basal body, distal rod, L ring"/>
    <property type="evidence" value="ECO:0007669"/>
    <property type="project" value="InterPro"/>
</dbReference>
<dbReference type="GO" id="GO:0009279">
    <property type="term" value="C:cell outer membrane"/>
    <property type="evidence" value="ECO:0007669"/>
    <property type="project" value="UniProtKB-SubCell"/>
</dbReference>
<dbReference type="GO" id="GO:0003774">
    <property type="term" value="F:cytoskeletal motor activity"/>
    <property type="evidence" value="ECO:0007669"/>
    <property type="project" value="InterPro"/>
</dbReference>
<dbReference type="GO" id="GO:0071973">
    <property type="term" value="P:bacterial-type flagellum-dependent cell motility"/>
    <property type="evidence" value="ECO:0007669"/>
    <property type="project" value="InterPro"/>
</dbReference>
<dbReference type="HAMAP" id="MF_00415">
    <property type="entry name" value="FlgH"/>
    <property type="match status" value="1"/>
</dbReference>
<dbReference type="InterPro" id="IPR000527">
    <property type="entry name" value="Flag_Lring"/>
</dbReference>
<dbReference type="PANTHER" id="PTHR34933">
    <property type="entry name" value="FLAGELLAR L-RING PROTEIN"/>
    <property type="match status" value="1"/>
</dbReference>
<dbReference type="PANTHER" id="PTHR34933:SF1">
    <property type="entry name" value="FLAGELLAR L-RING PROTEIN"/>
    <property type="match status" value="1"/>
</dbReference>
<dbReference type="Pfam" id="PF02107">
    <property type="entry name" value="FlgH"/>
    <property type="match status" value="1"/>
</dbReference>
<dbReference type="PRINTS" id="PR01008">
    <property type="entry name" value="FLGLRINGFLGH"/>
</dbReference>
<sequence length="222" mass="23540">MSRRMSLTALALLLAPAACSTYVEDRASEAWAPVYPVEEAERLDSLPTGGIYSSTSRGLFVSDRRAARVGDIVTVDFDEKFSASKSQSASGSRKSDYAIDLPDALTLGLDDGVLDNSTDQGFSGKGAASQSNSLRGRMSVSVTRVLPGGNLEIMGQKLLTLNNGNEYVRLKGVVRPEDIGPDNVVTSDRIAHAEIKYIGAGDTADTANAGWLRRGLSVVSPL</sequence>
<proteinExistence type="inferred from homology"/>
<organism>
    <name type="scientific">Cereibacter sphaeroides</name>
    <name type="common">Rhodobacter sphaeroides</name>
    <dbReference type="NCBI Taxonomy" id="1063"/>
    <lineage>
        <taxon>Bacteria</taxon>
        <taxon>Pseudomonadati</taxon>
        <taxon>Pseudomonadota</taxon>
        <taxon>Alphaproteobacteria</taxon>
        <taxon>Rhodobacterales</taxon>
        <taxon>Paracoccaceae</taxon>
        <taxon>Cereibacter</taxon>
    </lineage>
</organism>
<feature type="signal peptide" evidence="2">
    <location>
        <begin position="1"/>
        <end position="18"/>
    </location>
</feature>
<feature type="chain" id="PRO_0000009467" description="Flagellar L-ring protein">
    <location>
        <begin position="19"/>
        <end position="222"/>
    </location>
</feature>
<feature type="lipid moiety-binding region" description="N-palmitoyl cysteine" evidence="2">
    <location>
        <position position="19"/>
    </location>
</feature>
<feature type="lipid moiety-binding region" description="S-diacylglycerol cysteine" evidence="2">
    <location>
        <position position="19"/>
    </location>
</feature>
<reference key="1">
    <citation type="submission" date="1999-11" db="EMBL/GenBank/DDBJ databases">
        <title>Isolation and complementation of a flagellar P-ring mutant of Rhodobacter sphaeroides.</title>
        <authorList>
            <person name="Gonzalez-Pedrajo B."/>
            <person name="De la Mora J."/>
            <person name="Ballado T."/>
            <person name="Camarena L."/>
            <person name="Dreyfus G."/>
        </authorList>
    </citation>
    <scope>NUCLEOTIDE SEQUENCE [GENOMIC DNA]</scope>
    <source>
        <strain>WS8</strain>
    </source>
</reference>
<comment type="function">
    <text evidence="1">Assembles around the rod to form the L-ring and probably protects the motor/basal body from shearing forces during rotation.</text>
</comment>
<comment type="subunit">
    <text evidence="1">The basal body constitutes a major portion of the flagellar organelle and consists of four rings (L,P,S, and M) mounted on a central rod.</text>
</comment>
<comment type="subcellular location">
    <subcellularLocation>
        <location evidence="1">Cell outer membrane</location>
        <topology evidence="1">Lipid-anchor</topology>
    </subcellularLocation>
    <subcellularLocation>
        <location evidence="1">Bacterial flagellum basal body</location>
    </subcellularLocation>
</comment>
<comment type="similarity">
    <text evidence="3">Belongs to the FlgH family.</text>
</comment>
<name>FLGH_CERSP</name>
<gene>
    <name type="primary">flgH</name>
</gene>